<evidence type="ECO:0000250" key="1">
    <source>
        <dbReference type="UniProtKB" id="P35570"/>
    </source>
</evidence>
<evidence type="ECO:0000250" key="2">
    <source>
        <dbReference type="UniProtKB" id="Q9XTN2"/>
    </source>
</evidence>
<evidence type="ECO:0000255" key="3"/>
<evidence type="ECO:0000255" key="4">
    <source>
        <dbReference type="PROSITE-ProRule" id="PRU00145"/>
    </source>
</evidence>
<evidence type="ECO:0000255" key="5">
    <source>
        <dbReference type="PROSITE-ProRule" id="PRU00389"/>
    </source>
</evidence>
<evidence type="ECO:0000256" key="6">
    <source>
        <dbReference type="SAM" id="MobiDB-lite"/>
    </source>
</evidence>
<evidence type="ECO:0000312" key="7">
    <source>
        <dbReference type="EMBL" id="EDW52377.1"/>
    </source>
</evidence>
<feature type="chain" id="PRO_0000395321" description="Insulin receptor substrate 1">
    <location>
        <begin position="1"/>
        <end position="964"/>
    </location>
</feature>
<feature type="domain" description="PH" evidence="4">
    <location>
        <begin position="8"/>
        <end position="109"/>
    </location>
</feature>
<feature type="domain" description="IRS-type PTB" evidence="5">
    <location>
        <begin position="122"/>
        <end position="236"/>
    </location>
</feature>
<feature type="region of interest" description="Disordered" evidence="6">
    <location>
        <begin position="249"/>
        <end position="268"/>
    </location>
</feature>
<feature type="region of interest" description="Disordered" evidence="6">
    <location>
        <begin position="527"/>
        <end position="560"/>
    </location>
</feature>
<feature type="region of interest" description="Disordered" evidence="6">
    <location>
        <begin position="698"/>
        <end position="735"/>
    </location>
</feature>
<feature type="region of interest" description="Disordered" evidence="6">
    <location>
        <begin position="921"/>
        <end position="964"/>
    </location>
</feature>
<feature type="short sequence motif" description="YXXM motif 1" evidence="3">
    <location>
        <begin position="410"/>
        <end position="413"/>
    </location>
</feature>
<feature type="short sequence motif" description="YXXM motif 2" evidence="3">
    <location>
        <begin position="640"/>
        <end position="643"/>
    </location>
</feature>
<feature type="compositionally biased region" description="Polar residues" evidence="6">
    <location>
        <begin position="528"/>
        <end position="560"/>
    </location>
</feature>
<feature type="compositionally biased region" description="Basic and acidic residues" evidence="6">
    <location>
        <begin position="698"/>
        <end position="712"/>
    </location>
</feature>
<feature type="compositionally biased region" description="Polar residues" evidence="6">
    <location>
        <begin position="713"/>
        <end position="729"/>
    </location>
</feature>
<feature type="compositionally biased region" description="Low complexity" evidence="6">
    <location>
        <begin position="952"/>
        <end position="964"/>
    </location>
</feature>
<feature type="modified residue" description="Phosphoserine" evidence="2">
    <location>
        <position position="286"/>
    </location>
</feature>
<feature type="modified residue" description="Phosphoserine" evidence="2">
    <location>
        <position position="287"/>
    </location>
</feature>
<feature type="modified residue" description="Phosphoserine" evidence="2">
    <location>
        <position position="342"/>
    </location>
</feature>
<feature type="modified residue" description="Phosphotyrosine; by INSR" evidence="1">
    <location>
        <position position="410"/>
    </location>
</feature>
<feature type="modified residue" description="Phosphoserine" evidence="2">
    <location>
        <position position="554"/>
    </location>
</feature>
<feature type="modified residue" description="Phosphotyrosine; by INSR" evidence="1">
    <location>
        <position position="907"/>
    </location>
</feature>
<feature type="modified residue" description="Phosphoserine" evidence="2">
    <location>
        <position position="928"/>
    </location>
</feature>
<feature type="modified residue" description="Phosphoserine" evidence="2">
    <location>
        <position position="931"/>
    </location>
</feature>
<feature type="modified residue" description="Phosphotyrosine; by INSR" evidence="1">
    <location>
        <position position="944"/>
    </location>
</feature>
<comment type="function">
    <text evidence="1 2">Activates phosphatidylinositol 3-kinase when bound to the regulatory p85 subunit. May mediate the control of various cellular processes by insulin-like peptides. When phosphorylated by the insulin receptor binds specifically to various cellular proteins containing SH2 domains. Involved in control of cell proliferation, cell size, and body and organ growth throughout development. Also has a role in a signaling pathway controlling the physiological response required to endure periods of low nutrient conditions. Insulin/insulin-like growth factor (IGF) signaling pathway has a role in regulating aging and is necessary in the ovary for vitellogenic maturation (By similarity).</text>
</comment>
<comment type="subunit">
    <text evidence="2">Bindings to phosphatidylinositol 3-kinase and SHP2.</text>
</comment>
<keyword id="KW-0221">Differentiation</keyword>
<keyword id="KW-0341">Growth regulation</keyword>
<keyword id="KW-0896">Oogenesis</keyword>
<keyword id="KW-0597">Phosphoprotein</keyword>
<keyword id="KW-1185">Reference proteome</keyword>
<keyword id="KW-0677">Repeat</keyword>
<proteinExistence type="inferred from homology"/>
<protein>
    <recommendedName>
        <fullName evidence="2">Insulin receptor substrate 1</fullName>
    </recommendedName>
    <alternativeName>
        <fullName evidence="2">Protein chico</fullName>
    </alternativeName>
</protein>
<reference evidence="7" key="1">
    <citation type="journal article" date="2007" name="Nature">
        <title>Evolution of genes and genomes on the Drosophila phylogeny.</title>
        <authorList>
            <consortium name="Drosophila 12 genomes consortium"/>
        </authorList>
    </citation>
    <scope>NUCLEOTIDE SEQUENCE [LARGE SCALE GENOMIC DNA]</scope>
    <source>
        <strain evidence="7">Rob3c / Tucson 14021-0248.25</strain>
    </source>
</reference>
<name>IRS1_DROSE</name>
<dbReference type="EMBL" id="CH480818">
    <property type="protein sequence ID" value="EDW52377.1"/>
    <property type="molecule type" value="Genomic_DNA"/>
</dbReference>
<dbReference type="SMR" id="B4HWI2"/>
<dbReference type="STRING" id="7238.B4HWI2"/>
<dbReference type="EnsemblMetazoa" id="FBtr0194908">
    <property type="protein sequence ID" value="FBpp0193400"/>
    <property type="gene ID" value="FBgn0166864"/>
</dbReference>
<dbReference type="EnsemblMetazoa" id="XM_002036418.2">
    <property type="protein sequence ID" value="XP_002036454.1"/>
    <property type="gene ID" value="LOC6611937"/>
</dbReference>
<dbReference type="EnsemblMetazoa" id="XM_032717565.1">
    <property type="protein sequence ID" value="XP_032573456.1"/>
    <property type="gene ID" value="LOC6611937"/>
</dbReference>
<dbReference type="GeneID" id="6611937"/>
<dbReference type="KEGG" id="dse:6611937"/>
<dbReference type="CTD" id="30067"/>
<dbReference type="HOGENOM" id="CLU_012544_0_0_1"/>
<dbReference type="OMA" id="RNCSSPH"/>
<dbReference type="OrthoDB" id="47615at7215"/>
<dbReference type="PhylomeDB" id="B4HWI2"/>
<dbReference type="ChiTaRS" id="chico">
    <property type="organism name" value="fly"/>
</dbReference>
<dbReference type="Proteomes" id="UP000001292">
    <property type="component" value="Unassembled WGS sequence"/>
</dbReference>
<dbReference type="GO" id="GO:0005938">
    <property type="term" value="C:cell cortex"/>
    <property type="evidence" value="ECO:0007669"/>
    <property type="project" value="EnsemblMetazoa"/>
</dbReference>
<dbReference type="GO" id="GO:0005737">
    <property type="term" value="C:cytoplasm"/>
    <property type="evidence" value="ECO:0000250"/>
    <property type="project" value="UniProtKB"/>
</dbReference>
<dbReference type="GO" id="GO:0005829">
    <property type="term" value="C:cytosol"/>
    <property type="evidence" value="ECO:0007669"/>
    <property type="project" value="EnsemblMetazoa"/>
</dbReference>
<dbReference type="GO" id="GO:0043231">
    <property type="term" value="C:intracellular membrane-bounded organelle"/>
    <property type="evidence" value="ECO:0000250"/>
    <property type="project" value="UniProtKB"/>
</dbReference>
<dbReference type="GO" id="GO:0005634">
    <property type="term" value="C:nucleus"/>
    <property type="evidence" value="ECO:0000250"/>
    <property type="project" value="UniProtKB"/>
</dbReference>
<dbReference type="GO" id="GO:0005886">
    <property type="term" value="C:plasma membrane"/>
    <property type="evidence" value="ECO:0007669"/>
    <property type="project" value="TreeGrafter"/>
</dbReference>
<dbReference type="GO" id="GO:0005158">
    <property type="term" value="F:insulin receptor binding"/>
    <property type="evidence" value="ECO:0000250"/>
    <property type="project" value="UniProtKB"/>
</dbReference>
<dbReference type="GO" id="GO:0005159">
    <property type="term" value="F:insulin-like growth factor receptor binding"/>
    <property type="evidence" value="ECO:0000250"/>
    <property type="project" value="UniProtKB"/>
</dbReference>
<dbReference type="GO" id="GO:0043548">
    <property type="term" value="F:phosphatidylinositol 3-kinase binding"/>
    <property type="evidence" value="ECO:0007669"/>
    <property type="project" value="TreeGrafter"/>
</dbReference>
<dbReference type="GO" id="GO:0009267">
    <property type="term" value="P:cellular response to starvation"/>
    <property type="evidence" value="ECO:0007669"/>
    <property type="project" value="EnsemblMetazoa"/>
</dbReference>
<dbReference type="GO" id="GO:0008340">
    <property type="term" value="P:determination of adult lifespan"/>
    <property type="evidence" value="ECO:0007669"/>
    <property type="project" value="EnsemblMetazoa"/>
</dbReference>
<dbReference type="GO" id="GO:0060250">
    <property type="term" value="P:germ-line stem-cell niche homeostasis"/>
    <property type="evidence" value="ECO:0007669"/>
    <property type="project" value="EnsemblMetazoa"/>
</dbReference>
<dbReference type="GO" id="GO:0042593">
    <property type="term" value="P:glucose homeostasis"/>
    <property type="evidence" value="ECO:0007669"/>
    <property type="project" value="EnsemblMetazoa"/>
</dbReference>
<dbReference type="GO" id="GO:0007295">
    <property type="term" value="P:growth of a germarium-derived egg chamber"/>
    <property type="evidence" value="ECO:0007669"/>
    <property type="project" value="EnsemblMetazoa"/>
</dbReference>
<dbReference type="GO" id="GO:0008286">
    <property type="term" value="P:insulin receptor signaling pathway"/>
    <property type="evidence" value="ECO:0000250"/>
    <property type="project" value="UniProtKB"/>
</dbReference>
<dbReference type="GO" id="GO:0048009">
    <property type="term" value="P:insulin-like growth factor receptor signaling pathway"/>
    <property type="evidence" value="ECO:0000250"/>
    <property type="project" value="UniProtKB"/>
</dbReference>
<dbReference type="GO" id="GO:0055088">
    <property type="term" value="P:lipid homeostasis"/>
    <property type="evidence" value="ECO:0007669"/>
    <property type="project" value="EnsemblMetazoa"/>
</dbReference>
<dbReference type="GO" id="GO:0060291">
    <property type="term" value="P:long-term synaptic potentiation"/>
    <property type="evidence" value="ECO:0007669"/>
    <property type="project" value="EnsemblMetazoa"/>
</dbReference>
<dbReference type="GO" id="GO:0048133">
    <property type="term" value="P:male germ-line stem cell asymmetric division"/>
    <property type="evidence" value="ECO:0007669"/>
    <property type="project" value="EnsemblMetazoa"/>
</dbReference>
<dbReference type="GO" id="GO:0035264">
    <property type="term" value="P:multicellular organism growth"/>
    <property type="evidence" value="ECO:0007669"/>
    <property type="project" value="EnsemblMetazoa"/>
</dbReference>
<dbReference type="GO" id="GO:0061964">
    <property type="term" value="P:negative regulation of entry into reproductive diapause"/>
    <property type="evidence" value="ECO:0007669"/>
    <property type="project" value="EnsemblMetazoa"/>
</dbReference>
<dbReference type="GO" id="GO:0010897">
    <property type="term" value="P:negative regulation of triglyceride catabolic process"/>
    <property type="evidence" value="ECO:0007669"/>
    <property type="project" value="EnsemblMetazoa"/>
</dbReference>
<dbReference type="GO" id="GO:0008355">
    <property type="term" value="P:olfactory learning"/>
    <property type="evidence" value="ECO:0007669"/>
    <property type="project" value="EnsemblMetazoa"/>
</dbReference>
<dbReference type="GO" id="GO:1903688">
    <property type="term" value="P:positive regulation of border follicle cell migration"/>
    <property type="evidence" value="ECO:0007669"/>
    <property type="project" value="EnsemblMetazoa"/>
</dbReference>
<dbReference type="GO" id="GO:0008284">
    <property type="term" value="P:positive regulation of cell population proliferation"/>
    <property type="evidence" value="ECO:0007669"/>
    <property type="project" value="EnsemblMetazoa"/>
</dbReference>
<dbReference type="GO" id="GO:0045793">
    <property type="term" value="P:positive regulation of cell size"/>
    <property type="evidence" value="ECO:0007669"/>
    <property type="project" value="EnsemblMetazoa"/>
</dbReference>
<dbReference type="GO" id="GO:0050778">
    <property type="term" value="P:positive regulation of immune response"/>
    <property type="evidence" value="ECO:0007669"/>
    <property type="project" value="EnsemblMetazoa"/>
</dbReference>
<dbReference type="GO" id="GO:0040018">
    <property type="term" value="P:positive regulation of multicellular organism growth"/>
    <property type="evidence" value="ECO:0007669"/>
    <property type="project" value="EnsemblMetazoa"/>
</dbReference>
<dbReference type="GO" id="GO:0046622">
    <property type="term" value="P:positive regulation of organ growth"/>
    <property type="evidence" value="ECO:0007669"/>
    <property type="project" value="EnsemblMetazoa"/>
</dbReference>
<dbReference type="GO" id="GO:0051897">
    <property type="term" value="P:positive regulation of phosphatidylinositol 3-kinase/protein kinase B signal transduction"/>
    <property type="evidence" value="ECO:0007669"/>
    <property type="project" value="EnsemblMetazoa"/>
</dbReference>
<dbReference type="GO" id="GO:0007285">
    <property type="term" value="P:primary spermatocyte growth"/>
    <property type="evidence" value="ECO:0007669"/>
    <property type="project" value="EnsemblMetazoa"/>
</dbReference>
<dbReference type="GO" id="GO:0035159">
    <property type="term" value="P:regulation of tube length, open tracheal system"/>
    <property type="evidence" value="ECO:0007669"/>
    <property type="project" value="EnsemblMetazoa"/>
</dbReference>
<dbReference type="GO" id="GO:0034059">
    <property type="term" value="P:response to anoxia"/>
    <property type="evidence" value="ECO:0007669"/>
    <property type="project" value="EnsemblMetazoa"/>
</dbReference>
<dbReference type="GO" id="GO:0007296">
    <property type="term" value="P:vitellogenesis"/>
    <property type="evidence" value="ECO:0000250"/>
    <property type="project" value="UniProtKB"/>
</dbReference>
<dbReference type="CDD" id="cd01257">
    <property type="entry name" value="PH_IRS"/>
    <property type="match status" value="1"/>
</dbReference>
<dbReference type="CDD" id="cd01204">
    <property type="entry name" value="PTB_IRS"/>
    <property type="match status" value="1"/>
</dbReference>
<dbReference type="FunFam" id="2.30.29.30:FF:000441">
    <property type="entry name" value="Insulin receptor substrate 1"/>
    <property type="match status" value="1"/>
</dbReference>
<dbReference type="FunFam" id="2.30.29.30:FF:000457">
    <property type="entry name" value="Insulin receptor substrate 1"/>
    <property type="match status" value="1"/>
</dbReference>
<dbReference type="Gene3D" id="2.30.29.30">
    <property type="entry name" value="Pleckstrin-homology domain (PH domain)/Phosphotyrosine-binding domain (PTB)"/>
    <property type="match status" value="2"/>
</dbReference>
<dbReference type="InterPro" id="IPR039011">
    <property type="entry name" value="IRS"/>
</dbReference>
<dbReference type="InterPro" id="IPR002404">
    <property type="entry name" value="IRS_PTB"/>
</dbReference>
<dbReference type="InterPro" id="IPR011993">
    <property type="entry name" value="PH-like_dom_sf"/>
</dbReference>
<dbReference type="InterPro" id="IPR001849">
    <property type="entry name" value="PH_domain"/>
</dbReference>
<dbReference type="PANTHER" id="PTHR10614">
    <property type="entry name" value="INSULIN RECEPTOR SUBSTRATE"/>
    <property type="match status" value="1"/>
</dbReference>
<dbReference type="PANTHER" id="PTHR10614:SF13">
    <property type="entry name" value="INSULIN RECEPTOR SUBSTRATE 1"/>
    <property type="match status" value="1"/>
</dbReference>
<dbReference type="Pfam" id="PF02174">
    <property type="entry name" value="IRS"/>
    <property type="match status" value="1"/>
</dbReference>
<dbReference type="PRINTS" id="PR00628">
    <property type="entry name" value="INSULINRSI"/>
</dbReference>
<dbReference type="SMART" id="SM01244">
    <property type="entry name" value="IRS"/>
    <property type="match status" value="1"/>
</dbReference>
<dbReference type="SMART" id="SM00233">
    <property type="entry name" value="PH"/>
    <property type="match status" value="1"/>
</dbReference>
<dbReference type="SMART" id="SM00310">
    <property type="entry name" value="PTBI"/>
    <property type="match status" value="1"/>
</dbReference>
<dbReference type="SUPFAM" id="SSF50729">
    <property type="entry name" value="PH domain-like"/>
    <property type="match status" value="2"/>
</dbReference>
<dbReference type="PROSITE" id="PS51064">
    <property type="entry name" value="IRS_PTB"/>
    <property type="match status" value="1"/>
</dbReference>
<dbReference type="PROSITE" id="PS50003">
    <property type="entry name" value="PH_DOMAIN"/>
    <property type="match status" value="1"/>
</dbReference>
<accession>B4HWI2</accession>
<organism>
    <name type="scientific">Drosophila sechellia</name>
    <name type="common">Fruit fly</name>
    <dbReference type="NCBI Taxonomy" id="7238"/>
    <lineage>
        <taxon>Eukaryota</taxon>
        <taxon>Metazoa</taxon>
        <taxon>Ecdysozoa</taxon>
        <taxon>Arthropoda</taxon>
        <taxon>Hexapoda</taxon>
        <taxon>Insecta</taxon>
        <taxon>Pterygota</taxon>
        <taxon>Neoptera</taxon>
        <taxon>Endopterygota</taxon>
        <taxon>Diptera</taxon>
        <taxon>Brachycera</taxon>
        <taxon>Muscomorpha</taxon>
        <taxon>Ephydroidea</taxon>
        <taxon>Drosophilidae</taxon>
        <taxon>Drosophila</taxon>
        <taxon>Sophophora</taxon>
    </lineage>
</organism>
<gene>
    <name evidence="2" type="primary">chico</name>
    <name type="ORF">GM11923</name>
</gene>
<sequence length="964" mass="107560">MASISDDGMALSGNLKKLKTMKKKFFVLYEETSTSSARLEYYDTEKKFLQRAEPKRVIYLKNCFNINRRLDTKHRFVIVLSSRDGGFGIVLENENDLRKWLDKLLVLQRNIANSNGTAHSPYDQVWQVVIQKKGISEKVGITGTYHCCLTSKSLTFVCIGPEKTPNGEDRVASIEILLTTIRRCGHASPQCIFYVELGRQSVLGSGDLWMETDNAAVATNMHNMILSAMSAKTESNTNLINVYQNRPDLSHEPMRKRSSSANEASKPINVNVIQNSQNSLELRSCSSPHNYGFSRERCDSLPTRNGTLSESSNQTYFGSNHGLRFNTISGIRPHSTNKHSNSPTFTMPLRCSESEDSSISVDESDDNGSFSHYRLNTRTSETAIPEENIDDFASAEFSKVTEPNESDENYIPMNPVNPTDAIHEKEKADLQRLEDASLHFNFPEHASEKLAKDFDLDSDNQCCRPIRAYSIGNKVEHLKFNKRLGHLNDTGQNPNRVRAYSVGSKSKIPRCDLQRVVLVEDNKHEFASNRSQSSIGKEGSSYGSSANRQKKSTSAPLLSLKNQINSDRMSDLMEIDFSQATNLEKQKFIKNNEIPKYIENVFPKAPRTDSSSLTLHATSQKDIFNGSKLNNTAITSEDGYLEMKPVGNGYTPSSNCLPIKVEKLKLSDYQTTAPPLLTATAAPVQDLNKISTYNISAEKWREQPSRSEEKKSNSPLNDNPFSLKPTNVESKSKSHDVHSANQIDCEKVCVQSDKLNNLTDKIVENNNLDIGGHEEKKLVHSISSEDYTQIKDKANDFTKFNEAGYKILQIKSDSSLISSKLYQKGMHKDNLERTHRLTESVNTIPDNATATVGSSSLTKFNINSVKPAADSRSTGTDPSTAQNILQIKDLNFPSRSSSRISQPELHYASLDLPHCSGQNPAKYLKRGSRESPPVSACPEDGNTYARIDFDQSDSSSSSSNIFNT</sequence>